<name>PSD_MYCSK</name>
<evidence type="ECO:0000255" key="1">
    <source>
        <dbReference type="HAMAP-Rule" id="MF_00664"/>
    </source>
</evidence>
<accession>A1UAG5</accession>
<organism>
    <name type="scientific">Mycobacterium sp. (strain KMS)</name>
    <dbReference type="NCBI Taxonomy" id="189918"/>
    <lineage>
        <taxon>Bacteria</taxon>
        <taxon>Bacillati</taxon>
        <taxon>Actinomycetota</taxon>
        <taxon>Actinomycetes</taxon>
        <taxon>Mycobacteriales</taxon>
        <taxon>Mycobacteriaceae</taxon>
        <taxon>Mycobacterium</taxon>
    </lineage>
</organism>
<dbReference type="EC" id="4.1.1.65" evidence="1"/>
<dbReference type="EMBL" id="CP000518">
    <property type="protein sequence ID" value="ABL89823.1"/>
    <property type="molecule type" value="Genomic_DNA"/>
</dbReference>
<dbReference type="STRING" id="189918.Mkms_0607"/>
<dbReference type="KEGG" id="mkm:Mkms_0607"/>
<dbReference type="HOGENOM" id="CLU_072492_0_0_11"/>
<dbReference type="OrthoDB" id="9790893at2"/>
<dbReference type="UniPathway" id="UPA00558">
    <property type="reaction ID" value="UER00616"/>
</dbReference>
<dbReference type="GO" id="GO:0005886">
    <property type="term" value="C:plasma membrane"/>
    <property type="evidence" value="ECO:0007669"/>
    <property type="project" value="UniProtKB-SubCell"/>
</dbReference>
<dbReference type="GO" id="GO:0004609">
    <property type="term" value="F:phosphatidylserine decarboxylase activity"/>
    <property type="evidence" value="ECO:0007669"/>
    <property type="project" value="UniProtKB-UniRule"/>
</dbReference>
<dbReference type="GO" id="GO:0006646">
    <property type="term" value="P:phosphatidylethanolamine biosynthetic process"/>
    <property type="evidence" value="ECO:0007669"/>
    <property type="project" value="UniProtKB-UniRule"/>
</dbReference>
<dbReference type="HAMAP" id="MF_00664">
    <property type="entry name" value="PS_decarb_PSD_A"/>
    <property type="match status" value="1"/>
</dbReference>
<dbReference type="InterPro" id="IPR003817">
    <property type="entry name" value="PS_Dcarbxylase"/>
</dbReference>
<dbReference type="InterPro" id="IPR033175">
    <property type="entry name" value="PSD-A"/>
</dbReference>
<dbReference type="NCBIfam" id="NF003679">
    <property type="entry name" value="PRK05305.1-3"/>
    <property type="match status" value="1"/>
</dbReference>
<dbReference type="PANTHER" id="PTHR35809">
    <property type="entry name" value="ARCHAETIDYLSERINE DECARBOXYLASE PROENZYME-RELATED"/>
    <property type="match status" value="1"/>
</dbReference>
<dbReference type="PANTHER" id="PTHR35809:SF1">
    <property type="entry name" value="ARCHAETIDYLSERINE DECARBOXYLASE PROENZYME-RELATED"/>
    <property type="match status" value="1"/>
</dbReference>
<dbReference type="Pfam" id="PF02666">
    <property type="entry name" value="PS_Dcarbxylase"/>
    <property type="match status" value="1"/>
</dbReference>
<comment type="function">
    <text evidence="1">Catalyzes the formation of phosphatidylethanolamine (PtdEtn) from phosphatidylserine (PtdSer).</text>
</comment>
<comment type="catalytic activity">
    <reaction evidence="1">
        <text>a 1,2-diacyl-sn-glycero-3-phospho-L-serine + H(+) = a 1,2-diacyl-sn-glycero-3-phosphoethanolamine + CO2</text>
        <dbReference type="Rhea" id="RHEA:20828"/>
        <dbReference type="ChEBI" id="CHEBI:15378"/>
        <dbReference type="ChEBI" id="CHEBI:16526"/>
        <dbReference type="ChEBI" id="CHEBI:57262"/>
        <dbReference type="ChEBI" id="CHEBI:64612"/>
        <dbReference type="EC" id="4.1.1.65"/>
    </reaction>
</comment>
<comment type="cofactor">
    <cofactor evidence="1">
        <name>pyruvate</name>
        <dbReference type="ChEBI" id="CHEBI:15361"/>
    </cofactor>
    <text evidence="1">Binds 1 pyruvoyl group covalently per subunit.</text>
</comment>
<comment type="pathway">
    <text evidence="1">Phospholipid metabolism; phosphatidylethanolamine biosynthesis; phosphatidylethanolamine from CDP-diacylglycerol: step 2/2.</text>
</comment>
<comment type="subunit">
    <text evidence="1">Heterodimer of a large membrane-associated beta subunit and a small pyruvoyl-containing alpha subunit.</text>
</comment>
<comment type="subcellular location">
    <subcellularLocation>
        <location evidence="1">Cell membrane</location>
        <topology evidence="1">Peripheral membrane protein</topology>
    </subcellularLocation>
</comment>
<comment type="PTM">
    <text evidence="1">Is synthesized initially as an inactive proenzyme. Formation of the active enzyme involves a self-maturation process in which the active site pyruvoyl group is generated from an internal serine residue via an autocatalytic post-translational modification. Two non-identical subunits are generated from the proenzyme in this reaction, and the pyruvate is formed at the N-terminus of the alpha chain, which is derived from the carboxyl end of the proenzyme. The post-translation cleavage follows an unusual pathway, termed non-hydrolytic serinolysis, in which the side chain hydroxyl group of the serine supplies its oxygen atom to form the C-terminus of the beta chain, while the remainder of the serine residue undergoes an oxidative deamination to produce ammonia and the pyruvoyl prosthetic group on the alpha chain.</text>
</comment>
<comment type="similarity">
    <text evidence="1">Belongs to the phosphatidylserine decarboxylase family. PSD-A subfamily.</text>
</comment>
<gene>
    <name evidence="1" type="primary">psd</name>
    <name type="ordered locus">Mkms_0607</name>
</gene>
<protein>
    <recommendedName>
        <fullName evidence="1">Phosphatidylserine decarboxylase proenzyme</fullName>
        <ecNumber evidence="1">4.1.1.65</ecNumber>
    </recommendedName>
    <component>
        <recommendedName>
            <fullName evidence="1">Phosphatidylserine decarboxylase alpha chain</fullName>
        </recommendedName>
    </component>
    <component>
        <recommendedName>
            <fullName evidence="1">Phosphatidylserine decarboxylase beta chain</fullName>
        </recommendedName>
    </component>
</protein>
<sequence length="235" mass="24764">MARRPSTDDLRSGPERFMALVKTTVPPVHPAGLPFIGAGLALAAAGRRNRWVRGAGLVAAGANAAFFRHPPRVPPTRPGVVVAPADGLICLVEDAEPPAELNLPARPVPRVSIFLSIFDAHVQRIPISGEVVAVEHRPGLFGSAELAAASEDNERNSVVIRTDTGAQVIAVQIAGLVARRIVCDLTTGDKVTIGDTYGLIRYGSRLDTYLPEGTDIQVLPGQRAVGGETILAELP</sequence>
<reference key="1">
    <citation type="submission" date="2006-12" db="EMBL/GenBank/DDBJ databases">
        <title>Complete sequence of chromosome of Mycobacterium sp. KMS.</title>
        <authorList>
            <consortium name="US DOE Joint Genome Institute"/>
            <person name="Copeland A."/>
            <person name="Lucas S."/>
            <person name="Lapidus A."/>
            <person name="Barry K."/>
            <person name="Detter J.C."/>
            <person name="Glavina del Rio T."/>
            <person name="Hammon N."/>
            <person name="Israni S."/>
            <person name="Dalin E."/>
            <person name="Tice H."/>
            <person name="Pitluck S."/>
            <person name="Kiss H."/>
            <person name="Brettin T."/>
            <person name="Bruce D."/>
            <person name="Han C."/>
            <person name="Tapia R."/>
            <person name="Gilna P."/>
            <person name="Schmutz J."/>
            <person name="Larimer F."/>
            <person name="Land M."/>
            <person name="Hauser L."/>
            <person name="Kyrpides N."/>
            <person name="Mikhailova N."/>
            <person name="Miller C.D."/>
            <person name="Richardson P."/>
        </authorList>
    </citation>
    <scope>NUCLEOTIDE SEQUENCE [LARGE SCALE GENOMIC DNA]</scope>
    <source>
        <strain>KMS</strain>
    </source>
</reference>
<proteinExistence type="inferred from homology"/>
<feature type="chain" id="PRO_1000026658" description="Phosphatidylserine decarboxylase beta chain" evidence="1">
    <location>
        <begin position="1"/>
        <end position="203"/>
    </location>
</feature>
<feature type="chain" id="PRO_1000026659" description="Phosphatidylserine decarboxylase alpha chain" evidence="1">
    <location>
        <begin position="204"/>
        <end position="235"/>
    </location>
</feature>
<feature type="active site" description="Schiff-base intermediate with substrate; via pyruvic acid" evidence="1">
    <location>
        <position position="204"/>
    </location>
</feature>
<feature type="site" description="Cleavage (non-hydrolytic); by autocatalysis" evidence="1">
    <location>
        <begin position="203"/>
        <end position="204"/>
    </location>
</feature>
<feature type="modified residue" description="Pyruvic acid (Ser); by autocatalysis" evidence="1">
    <location>
        <position position="204"/>
    </location>
</feature>
<keyword id="KW-1003">Cell membrane</keyword>
<keyword id="KW-0210">Decarboxylase</keyword>
<keyword id="KW-0444">Lipid biosynthesis</keyword>
<keyword id="KW-0443">Lipid metabolism</keyword>
<keyword id="KW-0456">Lyase</keyword>
<keyword id="KW-0472">Membrane</keyword>
<keyword id="KW-0594">Phospholipid biosynthesis</keyword>
<keyword id="KW-1208">Phospholipid metabolism</keyword>
<keyword id="KW-0670">Pyruvate</keyword>
<keyword id="KW-0865">Zymogen</keyword>